<keyword id="KW-0002">3D-structure</keyword>
<keyword id="KW-0143">Chaperone</keyword>
<keyword id="KW-1035">Host cytoplasm</keyword>
<keyword id="KW-0597">Phosphoprotein</keyword>
<keyword id="KW-1185">Reference proteome</keyword>
<keyword id="KW-0693">Viral RNA replication</keyword>
<keyword id="KW-1195">Viral transcription</keyword>
<keyword id="KW-0946">Virion</keyword>
<feature type="chain" id="PRO_0000222838" description="Phosphoprotein">
    <location>
        <begin position="1"/>
        <end position="265"/>
    </location>
</feature>
<feature type="region of interest" description="Interaction with N(0)" evidence="16">
    <location>
        <begin position="1"/>
        <end position="60"/>
    </location>
</feature>
<feature type="region of interest" description="Disordered" evidence="3">
    <location>
        <begin position="35"/>
        <end position="77"/>
    </location>
</feature>
<feature type="region of interest" description="Interaction with the L polymerase" evidence="11">
    <location>
        <begin position="49"/>
        <end position="105"/>
    </location>
</feature>
<feature type="region of interest" description="Oligomerization" evidence="11">
    <location>
        <begin position="109"/>
        <end position="170"/>
    </location>
</feature>
<feature type="region of interest" description="Hinge">
    <location>
        <begin position="171"/>
        <end position="193"/>
    </location>
</feature>
<feature type="region of interest" description="Interaction with the Nucleoprotein-RNA and template-binding" evidence="1">
    <location>
        <begin position="245"/>
        <end position="265"/>
    </location>
</feature>
<feature type="compositionally biased region" description="Acidic residues" evidence="3">
    <location>
        <begin position="58"/>
        <end position="70"/>
    </location>
</feature>
<feature type="site" description="Involved in oligomerization" evidence="2">
    <location>
        <position position="138"/>
    </location>
</feature>
<feature type="site" description="Involved in oligomerization" evidence="2">
    <location>
        <position position="141"/>
    </location>
</feature>
<feature type="modified residue" description="Phosphotyrosine; by host" evidence="8">
    <location>
        <position position="14"/>
    </location>
</feature>
<feature type="modified residue" description="Phosphoserine; by host CK2" evidence="13">
    <location>
        <position position="60"/>
    </location>
</feature>
<feature type="modified residue" description="Phosphothreonine; by host CK2" evidence="13">
    <location>
        <position position="62"/>
    </location>
</feature>
<feature type="modified residue" description="Phosphoserine; by host CK2" evidence="13">
    <location>
        <position position="64"/>
    </location>
</feature>
<feature type="modified residue" description="Phosphoserine; by host" evidence="2">
    <location>
        <position position="226"/>
    </location>
</feature>
<feature type="modified residue" description="Phosphoserine; by host" evidence="2">
    <location>
        <position position="227"/>
    </location>
</feature>
<feature type="modified residue" description="Phosphoserine" evidence="2">
    <location>
        <position position="233"/>
    </location>
</feature>
<feature type="mutagenesis site" description="Complete loss of infectivity." evidence="4">
    <original>SDTES</original>
    <variation>ADAEA</variation>
    <location>
        <begin position="60"/>
        <end position="64"/>
    </location>
</feature>
<feature type="mutagenesis site" description="No effect on viral mRNAs levels and infectivity." evidence="4">
    <original>S</original>
    <variation>A</variation>
    <location>
        <position position="60"/>
    </location>
</feature>
<feature type="mutagenesis site" description="No effect on viral mRNAs levels and infectivity." evidence="4">
    <original>T</original>
    <variation>A</variation>
    <location>
        <position position="62"/>
    </location>
</feature>
<feature type="mutagenesis site" description="No effect on viral mRNAs levels and infectivity." evidence="4">
    <original>S</original>
    <variation>A</variation>
    <location>
        <position position="64"/>
    </location>
</feature>
<feature type="strand" evidence="20">
    <location>
        <begin position="97"/>
        <end position="99"/>
    </location>
</feature>
<feature type="turn" evidence="19">
    <location>
        <begin position="197"/>
        <end position="200"/>
    </location>
</feature>
<feature type="strand" evidence="19">
    <location>
        <begin position="204"/>
        <end position="214"/>
    </location>
</feature>
<feature type="strand" evidence="19">
    <location>
        <begin position="217"/>
        <end position="221"/>
    </location>
</feature>
<feature type="helix" evidence="19">
    <location>
        <begin position="222"/>
        <end position="224"/>
    </location>
</feature>
<feature type="helix" evidence="19">
    <location>
        <begin position="228"/>
        <end position="235"/>
    </location>
</feature>
<feature type="helix" evidence="19">
    <location>
        <begin position="243"/>
        <end position="253"/>
    </location>
</feature>
<feature type="helix" evidence="19">
    <location>
        <begin position="256"/>
        <end position="262"/>
    </location>
</feature>
<feature type="strand" evidence="19">
    <location>
        <begin position="263"/>
        <end position="265"/>
    </location>
</feature>
<proteinExistence type="evidence at protein level"/>
<comment type="function">
    <text evidence="4 5 10 12 14">Nonenzymatic cofactor regulating the function and conformation of the RNA polymerase and part of the transcription and replication complex (PubMed:15163735, PubMed:2845648, PubMed:8676480). Binds the viral ribonucleocapsid and positions the L polymerase on the template (PubMed:35476516). Acts as a chaperone for newly synthesized free N protein, so-called N(0). Plays a role in virion assembly by acting as a bridge between N and L (PubMed:15956555, PubMed:35476516).</text>
</comment>
<comment type="subunit">
    <text evidence="2 6 7 9 11 12 13">Homodimer (By similarity). Interacts with the L polymerase; the association of P and L forms the polymerase complex and positions P optimally for encapsidation of newly synthesized genomes with the nucleoprotein (PubMed:31914397, PubMed:35476516). Interacts (via N-terminus) with N(0) (PubMed:21207454). Interacts (via C-terminus) with N in ribonucleocapsid (via C-terminus); this interaction allows to package the L polymerase in the virion and positions the polymerase on the template, since P acts as a bridge between N and L (PubMed:18657547, PubMed:28396572, PubMed:35476516, PubMed:8525614).</text>
</comment>
<comment type="subcellular location">
    <subcellularLocation>
        <location evidence="12">Virion</location>
    </subcellularLocation>
    <subcellularLocation>
        <location evidence="15">Host cytoplasm</location>
    </subcellularLocation>
</comment>
<comment type="domain">
    <text evidence="2 5 6 7 10">The N-terminus is disordered and is involved in binding N(0) (PubMed:21207454). The region of interaction with the L polymerase is necessary for transcription. The hinge region is highly variable (PubMed:15956555). The central domain is involved in oligomerization (By similarity). The C-terminus is basic and essential for binding the N-RNA template (PubMed:18657547, PubMed:2845648).</text>
</comment>
<comment type="PTM">
    <text evidence="1 10 13">Phosphorylated in the N-terminus by host CK2 (PubMed:2845648, PubMed:8525614). Phosphorylation of the phosphoprotein is required for the transcriptional function of the P-L complex (By similarity).</text>
</comment>
<comment type="similarity">
    <text evidence="15">Belongs to the vesiculovirus protein P family.</text>
</comment>
<sequence>MDNLTKVREYLKSYSRLDQAVGEIDEIEAQRAEKSNYELFQEDGVEEHTKPSYFQAADDSDTESEPEIEDNQGLYAQDPEAEQVEGFIQGPLDDYADEEVDVVFTSDWKPPELESDEHGKTLRLTSPEGLSGEQKSQWLSTIKAVVQSAKYWNLAECTFEASGEGVIMKERQITPDVYKVTPVMNTHPSQSEAVSDVWSLSKTSMTFQPKKASLQPLTISLDELFSSRGEFISVGGDGRMSHKEAILLGLRYKKLYNQARVKYSL</sequence>
<accession>P03520</accession>
<gene>
    <name type="primary">P</name>
</gene>
<reference key="1">
    <citation type="journal article" date="1981" name="J. Virol.">
        <title>Nucleotide sequences of the mRNA's encoding the vesicular stomatitis virus N and NS proteins.</title>
        <authorList>
            <person name="Gallione C.J."/>
            <person name="Greene J.R."/>
            <person name="Iverson L.E."/>
            <person name="Rose J.K."/>
        </authorList>
    </citation>
    <scope>NUCLEOTIDE SEQUENCE [GENOMIC RNA]</scope>
</reference>
<reference key="2">
    <citation type="journal article" date="1986" name="J. Virol.">
        <title>Vesicular stomatitis virus N and NS proteins form multiple complexes.</title>
        <authorList>
            <person name="Davis N.L."/>
            <person name="Arnheiter H."/>
            <person name="Wertz G.W."/>
        </authorList>
    </citation>
    <scope>INTERACTION WITH THE NUCLEOPROTEIN</scope>
</reference>
<reference key="3">
    <citation type="journal article" date="1988" name="Virology">
        <title>The functional domains of the phosphoprotein (NS) of vesicular stomatitis virus (Indiana serotype).</title>
        <authorList>
            <person name="Paul P.R."/>
            <person name="Chattopadhyay D."/>
            <person name="Banerjee A.K."/>
        </authorList>
    </citation>
    <scope>FUNCTION</scope>
    <scope>INTERACTION WITH THE NUCLEOPROTEIN</scope>
    <scope>INTERACTION WITH THE L POLYMERASE</scope>
    <scope>DOMAIN</scope>
</reference>
<reference key="4">
    <citation type="journal article" date="1995" name="Virology">
        <title>Hierarchal constitutive phosphorylation of the vesicular stomatitis virus P protein and lack of effect on P1 to P2 conversion.</title>
        <authorList>
            <person name="Jackson R.L."/>
            <person name="Spadafora D."/>
            <person name="Perrault J."/>
        </authorList>
    </citation>
    <scope>PHOSPHORYLATION AT SER-60; THR-62 AND SER-64</scope>
    <scope>INTERACTION WITH THE NUCLEOPROTEIN</scope>
</reference>
<reference key="5">
    <citation type="journal article" date="1996" name="J. Virol.">
        <title>Constitutive phosphorylation of the vesicular stomatitis virus P protein modulates polymerase complex formation but is not essential for transcription or replication.</title>
        <authorList>
            <person name="Spadafora D."/>
            <person name="Canter D.M."/>
            <person name="Jackson R.L."/>
            <person name="Perrault J."/>
        </authorList>
    </citation>
    <scope>FUNCTION</scope>
</reference>
<reference key="6">
    <citation type="journal article" date="2004" name="J. Virol.">
        <title>Phosphorylation of vesicular stomatitis virus phosphoprotein P is indispensable for virus growth.</title>
        <authorList>
            <person name="Das S.C."/>
            <person name="Pattnaik A.K."/>
        </authorList>
    </citation>
    <scope>FUNCTION</scope>
    <scope>PHOSPHORYLATION AT SER-60; THR-62; SER-64; SER-226 AND SER-227</scope>
    <scope>MUTAGENESIS OF SER-60; THR-62 AND SER-64</scope>
</reference>
<reference key="7">
    <citation type="journal article" date="2005" name="J. Virol.">
        <title>Role of the hypervariable hinge region of phosphoprotein P of vesicular stomatitis virus in viral RNA synthesis and assembly of infectious virus particles.</title>
        <authorList>
            <person name="Das S.C."/>
            <person name="Pattnaik A.K."/>
        </authorList>
    </citation>
    <scope>FUNCTION</scope>
    <scope>DOMAIN</scope>
</reference>
<reference key="8">
    <citation type="journal article" date="2011" name="Protein Sci.">
        <title>The N(0)-binding region of the vesicular stomatitis virus phosphoprotein is globally disordered but contains transient alpha-helices.</title>
        <authorList>
            <person name="Leyrat C."/>
            <person name="Jensen M.R."/>
            <person name="Ribeiro E.A. Jr."/>
            <person name="Gerard F.C."/>
            <person name="Ruigrok R.W."/>
            <person name="Blackledge M."/>
            <person name="Jamin M."/>
        </authorList>
    </citation>
    <scope>INTERACTION WITH THE NUCLEOPROTEIN</scope>
    <scope>DOMAIN</scope>
</reference>
<reference key="9">
    <citation type="journal article" date="2014" name="J. Virol.">
        <title>Newly identified phosphorylation site in the vesicular stomatitis virus P protein is required for viral RNA synthesis.</title>
        <authorList>
            <person name="Mondal A."/>
            <person name="Victor K.G."/>
            <person name="Pudupakam R.S."/>
            <person name="Lyons C.E."/>
            <person name="Wertz G.W."/>
        </authorList>
    </citation>
    <scope>PHOSPHORYLATION AT TYR-14</scope>
</reference>
<reference key="10">
    <citation type="journal article" date="2017" name="EMBO Rep.">
        <title>Vesicular stomatitis virus N protein-specific single-domain antibody fragments inhibit replication.</title>
        <authorList>
            <person name="Hanke L."/>
            <person name="Schmidt F.I."/>
            <person name="Knockenhauer K.E."/>
            <person name="Morin B."/>
            <person name="Whelan S.P."/>
            <person name="Schwartz T.U."/>
            <person name="Ploegh H.L."/>
        </authorList>
    </citation>
    <scope>INTERACTION WITH THE NUCLEOPROTEIN</scope>
</reference>
<reference evidence="17" key="11">
    <citation type="journal article" date="2008" name="J. Mol. Biol.">
        <title>Solution structure of the C-terminal nucleoprotein-RNA binding domain of the vesicular stomatitis virus phosphoprotein.</title>
        <authorList>
            <person name="Ribeiro E.A. Jr."/>
            <person name="Favier A."/>
            <person name="Gerard F.C."/>
            <person name="Leyrat C."/>
            <person name="Brutscher B."/>
            <person name="Blondel D."/>
            <person name="Ruigrok R.W."/>
            <person name="Blackledge M."/>
            <person name="Jamin M."/>
        </authorList>
    </citation>
    <scope>STRUCTURE BY NMR OF 195-265</scope>
    <scope>INTERACTION WITH THE NUCLEOPROTEIN</scope>
    <scope>DOMAIN</scope>
</reference>
<reference evidence="18" key="12">
    <citation type="journal article" date="2020" name="Cell Rep.">
        <title>Structure of the Vesicular Stomatitis Virus L Protein in Complex with Its Phosphoprotein Cofactor.</title>
        <authorList>
            <person name="Jenni S."/>
            <person name="Bloyet L.M."/>
            <person name="Diaz-Avalos R."/>
            <person name="Liang B."/>
            <person name="Whelan S.P.J."/>
            <person name="Grigorieff N."/>
            <person name="Harrison S.C."/>
        </authorList>
    </citation>
    <scope>STRUCTURE BY ELECTRON MICROSCOPY (3.00 ANGSTROMS)</scope>
    <scope>INTERACTION WITH THE L POLYMERASE</scope>
    <scope>DOMAIN</scope>
</reference>
<reference key="13">
    <citation type="journal article" date="2022" name="Proc. Natl. Acad. Sci. U.S.A.">
        <title>Locations and in situ structure of the polymerase complex inside the virion of vesicular stomatitis virus.</title>
        <authorList>
            <person name="Si Z."/>
            <person name="Zhou K."/>
            <person name="Tsao J."/>
            <person name="Luo M."/>
            <person name="Zhou Z.H."/>
        </authorList>
    </citation>
    <scope>STRUCTURE BY ELECTRON MICROSCOPY (15.0 ANGSTROMS) OF THE VIRION</scope>
    <scope>SUBCELLULAR LOCATION</scope>
    <scope>FUNCTION</scope>
    <scope>INTERACTION WITH THE L POLYMERASE</scope>
</reference>
<organism>
    <name type="scientific">Vesicular stomatitis Indiana virus (strain San Juan)</name>
    <name type="common">VSIV</name>
    <dbReference type="NCBI Taxonomy" id="11285"/>
    <lineage>
        <taxon>Viruses</taxon>
        <taxon>Riboviria</taxon>
        <taxon>Orthornavirae</taxon>
        <taxon>Negarnaviricota</taxon>
        <taxon>Haploviricotina</taxon>
        <taxon>Monjiviricetes</taxon>
        <taxon>Mononegavirales</taxon>
        <taxon>Rhabdoviridae</taxon>
        <taxon>Alpharhabdovirinae</taxon>
        <taxon>Vesiculovirus</taxon>
        <taxon>Vesiculovirus indiana</taxon>
    </lineage>
</organism>
<dbReference type="EMBL" id="J02428">
    <property type="protein sequence ID" value="AAA48368.1"/>
    <property type="molecule type" value="Genomic_RNA"/>
</dbReference>
<dbReference type="RefSeq" id="NP_041713.1">
    <property type="nucleotide sequence ID" value="NC_001560.1"/>
</dbReference>
<dbReference type="PDB" id="2K47">
    <property type="method" value="NMR"/>
    <property type="chains" value="A=195-265"/>
</dbReference>
<dbReference type="PDB" id="6U1X">
    <property type="method" value="EM"/>
    <property type="resolution" value="3.00 A"/>
    <property type="chains" value="P=1-265"/>
</dbReference>
<dbReference type="PDBsum" id="2K47"/>
<dbReference type="PDBsum" id="6U1X"/>
<dbReference type="EMDB" id="EMD-20614"/>
<dbReference type="SMR" id="P03520"/>
<dbReference type="IntAct" id="P03520">
    <property type="interactions" value="1"/>
</dbReference>
<dbReference type="iPTMnet" id="P03520"/>
<dbReference type="DNASU" id="1489832"/>
<dbReference type="KEGG" id="vg:1489832"/>
<dbReference type="CD-CODE" id="01BEC43A">
    <property type="entry name" value="Synthetic Condensate 000315"/>
</dbReference>
<dbReference type="CD-CODE" id="0E37FC39">
    <property type="entry name" value="Cytoplasmic viral factory"/>
</dbReference>
<dbReference type="EvolutionaryTrace" id="P03520"/>
<dbReference type="Proteomes" id="UP000002327">
    <property type="component" value="Segment"/>
</dbReference>
<dbReference type="GO" id="GO:0030430">
    <property type="term" value="C:host cell cytoplasm"/>
    <property type="evidence" value="ECO:0007669"/>
    <property type="project" value="UniProtKB-SubCell"/>
</dbReference>
<dbReference type="GO" id="GO:0044423">
    <property type="term" value="C:virion component"/>
    <property type="evidence" value="ECO:0007669"/>
    <property type="project" value="UniProtKB-KW"/>
</dbReference>
<dbReference type="GO" id="GO:0140691">
    <property type="term" value="F:RNA folding chaperone"/>
    <property type="evidence" value="ECO:0000269"/>
    <property type="project" value="DisProt"/>
</dbReference>
<dbReference type="GO" id="GO:0003968">
    <property type="term" value="F:RNA-directed RNA polymerase activity"/>
    <property type="evidence" value="ECO:0007669"/>
    <property type="project" value="InterPro"/>
</dbReference>
<dbReference type="GO" id="GO:0016310">
    <property type="term" value="P:phosphorylation"/>
    <property type="evidence" value="ECO:0000314"/>
    <property type="project" value="UniProtKB"/>
</dbReference>
<dbReference type="GO" id="GO:0019079">
    <property type="term" value="P:viral genome replication"/>
    <property type="evidence" value="ECO:0000314"/>
    <property type="project" value="UniProtKB"/>
</dbReference>
<dbReference type="GO" id="GO:0019083">
    <property type="term" value="P:viral transcription"/>
    <property type="evidence" value="ECO:0000314"/>
    <property type="project" value="UniProtKB"/>
</dbReference>
<dbReference type="CDD" id="cd21033">
    <property type="entry name" value="VSV_P-protein-C_like"/>
    <property type="match status" value="1"/>
</dbReference>
<dbReference type="DisProt" id="DP01391"/>
<dbReference type="FunFam" id="1.10.8.440:FF:000001">
    <property type="entry name" value="Phosphoprotein"/>
    <property type="match status" value="1"/>
</dbReference>
<dbReference type="Gene3D" id="6.10.140.830">
    <property type="match status" value="1"/>
</dbReference>
<dbReference type="Gene3D" id="1.10.8.440">
    <property type="entry name" value="Vesicular stomatitis virus phosphoprotein C-terminal domain"/>
    <property type="match status" value="1"/>
</dbReference>
<dbReference type="InterPro" id="IPR048220">
    <property type="entry name" value="P-protein-C_vesiculovirus"/>
</dbReference>
<dbReference type="InterPro" id="IPR043036">
    <property type="entry name" value="Phosphoprotein_C_viral"/>
</dbReference>
<dbReference type="InterPro" id="IPR037263">
    <property type="entry name" value="Phosphoprotein_central"/>
</dbReference>
<dbReference type="Pfam" id="PF00922">
    <property type="entry name" value="Phosphoprotein"/>
    <property type="match status" value="1"/>
</dbReference>
<dbReference type="SUPFAM" id="SSF160892">
    <property type="entry name" value="Phosphoprotein oligomerization domain-like"/>
    <property type="match status" value="1"/>
</dbReference>
<organismHost>
    <name type="scientific">Aedes</name>
    <dbReference type="NCBI Taxonomy" id="7158"/>
</organismHost>
<organismHost>
    <name type="scientific">Bos taurus</name>
    <name type="common">Bovine</name>
    <dbReference type="NCBI Taxonomy" id="9913"/>
</organismHost>
<organismHost>
    <name type="scientific">Culicoides</name>
    <dbReference type="NCBI Taxonomy" id="58271"/>
</organismHost>
<organismHost>
    <name type="scientific">Equus asinus</name>
    <name type="common">Donkey</name>
    <name type="synonym">Equus africanus asinus</name>
    <dbReference type="NCBI Taxonomy" id="9793"/>
</organismHost>
<organismHost>
    <name type="scientific">Equus caballus</name>
    <name type="common">Horse</name>
    <dbReference type="NCBI Taxonomy" id="9796"/>
</organismHost>
<organismHost>
    <name type="scientific">Homo sapiens</name>
    <name type="common">Human</name>
    <dbReference type="NCBI Taxonomy" id="9606"/>
</organismHost>
<organismHost>
    <name type="scientific">Lutzomyia</name>
    <dbReference type="NCBI Taxonomy" id="252607"/>
</organismHost>
<organismHost>
    <name type="scientific">Musca domestica</name>
    <name type="common">House fly</name>
    <dbReference type="NCBI Taxonomy" id="7370"/>
</organismHost>
<organismHost>
    <name type="scientific">Simuliidae</name>
    <name type="common">black flies</name>
    <dbReference type="NCBI Taxonomy" id="7190"/>
</organismHost>
<organismHost>
    <name type="scientific">Sus scrofa</name>
    <name type="common">Pig</name>
    <dbReference type="NCBI Taxonomy" id="9823"/>
</organismHost>
<protein>
    <recommendedName>
        <fullName>Phosphoprotein</fullName>
        <shortName>P protein</shortName>
    </recommendedName>
    <alternativeName>
        <fullName>Protein M1</fullName>
    </alternativeName>
</protein>
<evidence type="ECO:0000250" key="1">
    <source>
        <dbReference type="UniProtKB" id="P04877"/>
    </source>
</evidence>
<evidence type="ECO:0000250" key="2">
    <source>
        <dbReference type="UniProtKB" id="P04880"/>
    </source>
</evidence>
<evidence type="ECO:0000256" key="3">
    <source>
        <dbReference type="SAM" id="MobiDB-lite"/>
    </source>
</evidence>
<evidence type="ECO:0000269" key="4">
    <source>
    </source>
</evidence>
<evidence type="ECO:0000269" key="5">
    <source>
    </source>
</evidence>
<evidence type="ECO:0000269" key="6">
    <source>
    </source>
</evidence>
<evidence type="ECO:0000269" key="7">
    <source>
    </source>
</evidence>
<evidence type="ECO:0000269" key="8">
    <source>
    </source>
</evidence>
<evidence type="ECO:0000269" key="9">
    <source>
    </source>
</evidence>
<evidence type="ECO:0000269" key="10">
    <source>
    </source>
</evidence>
<evidence type="ECO:0000269" key="11">
    <source>
    </source>
</evidence>
<evidence type="ECO:0000269" key="12">
    <source>
    </source>
</evidence>
<evidence type="ECO:0000269" key="13">
    <source>
    </source>
</evidence>
<evidence type="ECO:0000269" key="14">
    <source>
    </source>
</evidence>
<evidence type="ECO:0000305" key="15"/>
<evidence type="ECO:0000305" key="16">
    <source>
    </source>
</evidence>
<evidence type="ECO:0007744" key="17">
    <source>
        <dbReference type="PDB" id="2K47"/>
    </source>
</evidence>
<evidence type="ECO:0007744" key="18">
    <source>
        <dbReference type="PDB" id="6U1X"/>
    </source>
</evidence>
<evidence type="ECO:0007829" key="19">
    <source>
        <dbReference type="PDB" id="2K47"/>
    </source>
</evidence>
<evidence type="ECO:0007829" key="20">
    <source>
        <dbReference type="PDB" id="6U1X"/>
    </source>
</evidence>
<name>PHOSP_VSIVA</name>